<protein>
    <recommendedName>
        <fullName evidence="1">Pentafunctional AROM polypeptide</fullName>
    </recommendedName>
    <domain>
        <recommendedName>
            <fullName evidence="1">3-dehydroquinate synthase</fullName>
            <shortName evidence="1">DHQS</shortName>
            <ecNumber evidence="1">4.2.3.4</ecNumber>
        </recommendedName>
    </domain>
    <domain>
        <recommendedName>
            <fullName evidence="1">3-phosphoshikimate 1-carboxyvinyltransferase</fullName>
            <ecNumber evidence="1">2.5.1.19</ecNumber>
        </recommendedName>
        <alternativeName>
            <fullName evidence="1">5-enolpyruvylshikimate-3-phosphate synthase</fullName>
            <shortName evidence="1">EPSP synthase</shortName>
            <shortName evidence="1">EPSPS</shortName>
        </alternativeName>
    </domain>
    <domain>
        <recommendedName>
            <fullName evidence="1">Shikimate kinase</fullName>
            <shortName evidence="1">SK</shortName>
            <ecNumber evidence="1">2.7.1.71</ecNumber>
        </recommendedName>
    </domain>
    <domain>
        <recommendedName>
            <fullName evidence="1">3-dehydroquinate dehydratase</fullName>
            <shortName evidence="1">3-dehydroquinase</shortName>
            <ecNumber evidence="1">4.2.1.10</ecNumber>
        </recommendedName>
    </domain>
    <domain>
        <recommendedName>
            <fullName evidence="1">Shikimate dehydrogenase</fullName>
            <ecNumber evidence="1">1.1.1.25</ecNumber>
        </recommendedName>
    </domain>
</protein>
<name>ARO1_BLAGS</name>
<proteinExistence type="inferred from homology"/>
<keyword id="KW-0028">Amino-acid biosynthesis</keyword>
<keyword id="KW-0057">Aromatic amino acid biosynthesis</keyword>
<keyword id="KW-0067">ATP-binding</keyword>
<keyword id="KW-0963">Cytoplasm</keyword>
<keyword id="KW-0418">Kinase</keyword>
<keyword id="KW-0456">Lyase</keyword>
<keyword id="KW-0479">Metal-binding</keyword>
<keyword id="KW-0511">Multifunctional enzyme</keyword>
<keyword id="KW-0521">NADP</keyword>
<keyword id="KW-0547">Nucleotide-binding</keyword>
<keyword id="KW-0560">Oxidoreductase</keyword>
<keyword id="KW-1185">Reference proteome</keyword>
<keyword id="KW-0808">Transferase</keyword>
<keyword id="KW-0862">Zinc</keyword>
<dbReference type="EC" id="4.2.3.4" evidence="1"/>
<dbReference type="EC" id="2.5.1.19" evidence="1"/>
<dbReference type="EC" id="2.7.1.71" evidence="1"/>
<dbReference type="EC" id="4.2.1.10" evidence="1"/>
<dbReference type="EC" id="1.1.1.25" evidence="1"/>
<dbReference type="EMBL" id="GG657451">
    <property type="protein sequence ID" value="OAT06859.1"/>
    <property type="molecule type" value="Genomic_DNA"/>
</dbReference>
<dbReference type="RefSeq" id="XP_002626822.1">
    <property type="nucleotide sequence ID" value="XM_002626776.2"/>
</dbReference>
<dbReference type="SMR" id="C5JKE6"/>
<dbReference type="STRING" id="559298.C5JKE6"/>
<dbReference type="GeneID" id="8506021"/>
<dbReference type="KEGG" id="bgh:BDBG_02999"/>
<dbReference type="VEuPathDB" id="FungiDB:BDBG_02999"/>
<dbReference type="HOGENOM" id="CLU_001201_1_2_1"/>
<dbReference type="OrthoDB" id="197068at2759"/>
<dbReference type="UniPathway" id="UPA00053">
    <property type="reaction ID" value="UER00085"/>
</dbReference>
<dbReference type="UniPathway" id="UPA00053">
    <property type="reaction ID" value="UER00086"/>
</dbReference>
<dbReference type="UniPathway" id="UPA00053">
    <property type="reaction ID" value="UER00087"/>
</dbReference>
<dbReference type="UniPathway" id="UPA00053">
    <property type="reaction ID" value="UER00088"/>
</dbReference>
<dbReference type="UniPathway" id="UPA00053">
    <property type="reaction ID" value="UER00089"/>
</dbReference>
<dbReference type="Proteomes" id="UP000002038">
    <property type="component" value="Unassembled WGS sequence"/>
</dbReference>
<dbReference type="GO" id="GO:0005737">
    <property type="term" value="C:cytoplasm"/>
    <property type="evidence" value="ECO:0007669"/>
    <property type="project" value="UniProtKB-SubCell"/>
</dbReference>
<dbReference type="GO" id="GO:0003855">
    <property type="term" value="F:3-dehydroquinate dehydratase activity"/>
    <property type="evidence" value="ECO:0007669"/>
    <property type="project" value="UniProtKB-UniRule"/>
</dbReference>
<dbReference type="GO" id="GO:0003856">
    <property type="term" value="F:3-dehydroquinate synthase activity"/>
    <property type="evidence" value="ECO:0007669"/>
    <property type="project" value="UniProtKB-UniRule"/>
</dbReference>
<dbReference type="GO" id="GO:0003866">
    <property type="term" value="F:3-phosphoshikimate 1-carboxyvinyltransferase activity"/>
    <property type="evidence" value="ECO:0007669"/>
    <property type="project" value="UniProtKB-UniRule"/>
</dbReference>
<dbReference type="GO" id="GO:0005524">
    <property type="term" value="F:ATP binding"/>
    <property type="evidence" value="ECO:0007669"/>
    <property type="project" value="UniProtKB-UniRule"/>
</dbReference>
<dbReference type="GO" id="GO:0046872">
    <property type="term" value="F:metal ion binding"/>
    <property type="evidence" value="ECO:0007669"/>
    <property type="project" value="UniProtKB-UniRule"/>
</dbReference>
<dbReference type="GO" id="GO:0004764">
    <property type="term" value="F:shikimate 3-dehydrogenase (NADP+) activity"/>
    <property type="evidence" value="ECO:0007669"/>
    <property type="project" value="UniProtKB-UniRule"/>
</dbReference>
<dbReference type="GO" id="GO:0004765">
    <property type="term" value="F:shikimate kinase activity"/>
    <property type="evidence" value="ECO:0007669"/>
    <property type="project" value="UniProtKB-UniRule"/>
</dbReference>
<dbReference type="GO" id="GO:0008652">
    <property type="term" value="P:amino acid biosynthetic process"/>
    <property type="evidence" value="ECO:0007669"/>
    <property type="project" value="UniProtKB-KW"/>
</dbReference>
<dbReference type="GO" id="GO:0009073">
    <property type="term" value="P:aromatic amino acid family biosynthetic process"/>
    <property type="evidence" value="ECO:0007669"/>
    <property type="project" value="UniProtKB-UniRule"/>
</dbReference>
<dbReference type="GO" id="GO:0009423">
    <property type="term" value="P:chorismate biosynthetic process"/>
    <property type="evidence" value="ECO:0007669"/>
    <property type="project" value="UniProtKB-UniRule"/>
</dbReference>
<dbReference type="CDD" id="cd00502">
    <property type="entry name" value="DHQase_I"/>
    <property type="match status" value="1"/>
</dbReference>
<dbReference type="CDD" id="cd08195">
    <property type="entry name" value="DHQS"/>
    <property type="match status" value="1"/>
</dbReference>
<dbReference type="CDD" id="cd01556">
    <property type="entry name" value="EPSP_synthase"/>
    <property type="match status" value="1"/>
</dbReference>
<dbReference type="CDD" id="cd01065">
    <property type="entry name" value="NAD_bind_Shikimate_DH"/>
    <property type="match status" value="1"/>
</dbReference>
<dbReference type="CDD" id="cd00464">
    <property type="entry name" value="SK"/>
    <property type="match status" value="1"/>
</dbReference>
<dbReference type="FunFam" id="1.20.1090.10:FF:000007">
    <property type="entry name" value="Pentafunctional AROM polypeptide"/>
    <property type="match status" value="1"/>
</dbReference>
<dbReference type="FunFam" id="3.20.20.70:FF:000135">
    <property type="entry name" value="Pentafunctional AROM polypeptide"/>
    <property type="match status" value="1"/>
</dbReference>
<dbReference type="FunFam" id="3.40.50.1970:FF:000007">
    <property type="entry name" value="Pentafunctional AROM polypeptide"/>
    <property type="match status" value="1"/>
</dbReference>
<dbReference type="FunFam" id="3.40.50.300:FF:001256">
    <property type="entry name" value="Pentafunctional AROM polypeptide"/>
    <property type="match status" value="1"/>
</dbReference>
<dbReference type="FunFam" id="3.65.10.10:FF:000007">
    <property type="entry name" value="Pentafunctional AROM polypeptide"/>
    <property type="match status" value="1"/>
</dbReference>
<dbReference type="FunFam" id="3.65.10.10:FF:000008">
    <property type="entry name" value="Pentafunctional AROM polypeptide"/>
    <property type="match status" value="1"/>
</dbReference>
<dbReference type="Gene3D" id="3.40.50.1970">
    <property type="match status" value="1"/>
</dbReference>
<dbReference type="Gene3D" id="3.20.20.70">
    <property type="entry name" value="Aldolase class I"/>
    <property type="match status" value="1"/>
</dbReference>
<dbReference type="Gene3D" id="1.20.1090.10">
    <property type="entry name" value="Dehydroquinate synthase-like - alpha domain"/>
    <property type="match status" value="1"/>
</dbReference>
<dbReference type="Gene3D" id="3.65.10.10">
    <property type="entry name" value="Enolpyruvate transferase domain"/>
    <property type="match status" value="2"/>
</dbReference>
<dbReference type="Gene3D" id="3.40.50.10860">
    <property type="entry name" value="Leucine Dehydrogenase, chain A, domain 1"/>
    <property type="match status" value="1"/>
</dbReference>
<dbReference type="Gene3D" id="3.40.50.720">
    <property type="entry name" value="NAD(P)-binding Rossmann-like Domain"/>
    <property type="match status" value="1"/>
</dbReference>
<dbReference type="Gene3D" id="3.40.50.300">
    <property type="entry name" value="P-loop containing nucleotide triphosphate hydrolases"/>
    <property type="match status" value="1"/>
</dbReference>
<dbReference type="HAMAP" id="MF_00210">
    <property type="entry name" value="EPSP_synth"/>
    <property type="match status" value="1"/>
</dbReference>
<dbReference type="HAMAP" id="MF_03143">
    <property type="entry name" value="Pentafunct_AroM"/>
    <property type="match status" value="1"/>
</dbReference>
<dbReference type="HAMAP" id="MF_00109">
    <property type="entry name" value="Shikimate_kinase"/>
    <property type="match status" value="1"/>
</dbReference>
<dbReference type="InterPro" id="IPR018508">
    <property type="entry name" value="3-dehydroquinate_DH_AS"/>
</dbReference>
<dbReference type="InterPro" id="IPR013785">
    <property type="entry name" value="Aldolase_TIM"/>
</dbReference>
<dbReference type="InterPro" id="IPR046346">
    <property type="entry name" value="Aminoacid_DH-like_N_sf"/>
</dbReference>
<dbReference type="InterPro" id="IPR016037">
    <property type="entry name" value="DHQ_synth_AroB"/>
</dbReference>
<dbReference type="InterPro" id="IPR030960">
    <property type="entry name" value="DHQS/DOIS_N"/>
</dbReference>
<dbReference type="InterPro" id="IPR056179">
    <property type="entry name" value="DHQS_C"/>
</dbReference>
<dbReference type="InterPro" id="IPR001381">
    <property type="entry name" value="DHquinase_I"/>
</dbReference>
<dbReference type="InterPro" id="IPR001986">
    <property type="entry name" value="Enolpyruvate_Tfrase_dom"/>
</dbReference>
<dbReference type="InterPro" id="IPR036968">
    <property type="entry name" value="Enolpyruvate_Tfrase_sf"/>
</dbReference>
<dbReference type="InterPro" id="IPR006264">
    <property type="entry name" value="EPSP_synthase"/>
</dbReference>
<dbReference type="InterPro" id="IPR023193">
    <property type="entry name" value="EPSP_synthase_CS"/>
</dbReference>
<dbReference type="InterPro" id="IPR036291">
    <property type="entry name" value="NAD(P)-bd_dom_sf"/>
</dbReference>
<dbReference type="InterPro" id="IPR027417">
    <property type="entry name" value="P-loop_NTPase"/>
</dbReference>
<dbReference type="InterPro" id="IPR008289">
    <property type="entry name" value="Pentafunct_AroM"/>
</dbReference>
<dbReference type="InterPro" id="IPR013792">
    <property type="entry name" value="RNA3'P_cycl/enolpyr_Trfase_a/b"/>
</dbReference>
<dbReference type="InterPro" id="IPR031322">
    <property type="entry name" value="Shikimate/glucono_kinase"/>
</dbReference>
<dbReference type="InterPro" id="IPR013708">
    <property type="entry name" value="Shikimate_DH-bd_N"/>
</dbReference>
<dbReference type="InterPro" id="IPR010110">
    <property type="entry name" value="Shikimate_DH_AroM-type"/>
</dbReference>
<dbReference type="InterPro" id="IPR000623">
    <property type="entry name" value="Shikimate_kinase/TSH1"/>
</dbReference>
<dbReference type="InterPro" id="IPR023000">
    <property type="entry name" value="Shikimate_kinase_CS"/>
</dbReference>
<dbReference type="NCBIfam" id="TIGR01356">
    <property type="entry name" value="aroA"/>
    <property type="match status" value="1"/>
</dbReference>
<dbReference type="NCBIfam" id="TIGR01357">
    <property type="entry name" value="aroB"/>
    <property type="match status" value="1"/>
</dbReference>
<dbReference type="NCBIfam" id="TIGR01093">
    <property type="entry name" value="aroD"/>
    <property type="match status" value="1"/>
</dbReference>
<dbReference type="NCBIfam" id="TIGR01809">
    <property type="entry name" value="Shik-DH-AROM"/>
    <property type="match status" value="1"/>
</dbReference>
<dbReference type="PANTHER" id="PTHR21090">
    <property type="entry name" value="AROM/DEHYDROQUINATE SYNTHASE"/>
    <property type="match status" value="1"/>
</dbReference>
<dbReference type="PANTHER" id="PTHR21090:SF5">
    <property type="entry name" value="PENTAFUNCTIONAL AROM POLYPEPTIDE"/>
    <property type="match status" value="1"/>
</dbReference>
<dbReference type="Pfam" id="PF01761">
    <property type="entry name" value="DHQ_synthase"/>
    <property type="match status" value="1"/>
</dbReference>
<dbReference type="Pfam" id="PF24621">
    <property type="entry name" value="DHQS_C"/>
    <property type="match status" value="1"/>
</dbReference>
<dbReference type="Pfam" id="PF01487">
    <property type="entry name" value="DHquinase_I"/>
    <property type="match status" value="1"/>
</dbReference>
<dbReference type="Pfam" id="PF00275">
    <property type="entry name" value="EPSP_synthase"/>
    <property type="match status" value="1"/>
</dbReference>
<dbReference type="Pfam" id="PF08501">
    <property type="entry name" value="Shikimate_dh_N"/>
    <property type="match status" value="1"/>
</dbReference>
<dbReference type="Pfam" id="PF01202">
    <property type="entry name" value="SKI"/>
    <property type="match status" value="1"/>
</dbReference>
<dbReference type="PIRSF" id="PIRSF000514">
    <property type="entry name" value="Pentafunct_AroM"/>
    <property type="match status" value="1"/>
</dbReference>
<dbReference type="PRINTS" id="PR01100">
    <property type="entry name" value="SHIKIMTKNASE"/>
</dbReference>
<dbReference type="SUPFAM" id="SSF51569">
    <property type="entry name" value="Aldolase"/>
    <property type="match status" value="1"/>
</dbReference>
<dbReference type="SUPFAM" id="SSF53223">
    <property type="entry name" value="Aminoacid dehydrogenase-like, N-terminal domain"/>
    <property type="match status" value="1"/>
</dbReference>
<dbReference type="SUPFAM" id="SSF56796">
    <property type="entry name" value="Dehydroquinate synthase-like"/>
    <property type="match status" value="1"/>
</dbReference>
<dbReference type="SUPFAM" id="SSF55205">
    <property type="entry name" value="EPT/RTPC-like"/>
    <property type="match status" value="1"/>
</dbReference>
<dbReference type="SUPFAM" id="SSF51735">
    <property type="entry name" value="NAD(P)-binding Rossmann-fold domains"/>
    <property type="match status" value="1"/>
</dbReference>
<dbReference type="SUPFAM" id="SSF52540">
    <property type="entry name" value="P-loop containing nucleoside triphosphate hydrolases"/>
    <property type="match status" value="1"/>
</dbReference>
<dbReference type="PROSITE" id="PS01028">
    <property type="entry name" value="DEHYDROQUINASE_I"/>
    <property type="match status" value="1"/>
</dbReference>
<dbReference type="PROSITE" id="PS00104">
    <property type="entry name" value="EPSP_SYNTHASE_1"/>
    <property type="match status" value="1"/>
</dbReference>
<dbReference type="PROSITE" id="PS00885">
    <property type="entry name" value="EPSP_SYNTHASE_2"/>
    <property type="match status" value="1"/>
</dbReference>
<dbReference type="PROSITE" id="PS01128">
    <property type="entry name" value="SHIKIMATE_KINASE"/>
    <property type="match status" value="1"/>
</dbReference>
<comment type="function">
    <text evidence="1">The AROM polypeptide catalyzes 5 consecutive enzymatic reactions in prechorismate polyaromatic amino acid biosynthesis.</text>
</comment>
<comment type="catalytic activity">
    <reaction evidence="1">
        <text>7-phospho-2-dehydro-3-deoxy-D-arabino-heptonate = 3-dehydroquinate + phosphate</text>
        <dbReference type="Rhea" id="RHEA:21968"/>
        <dbReference type="ChEBI" id="CHEBI:32364"/>
        <dbReference type="ChEBI" id="CHEBI:43474"/>
        <dbReference type="ChEBI" id="CHEBI:58394"/>
        <dbReference type="EC" id="4.2.3.4"/>
    </reaction>
</comment>
<comment type="catalytic activity">
    <reaction evidence="1">
        <text>3-dehydroquinate = 3-dehydroshikimate + H2O</text>
        <dbReference type="Rhea" id="RHEA:21096"/>
        <dbReference type="ChEBI" id="CHEBI:15377"/>
        <dbReference type="ChEBI" id="CHEBI:16630"/>
        <dbReference type="ChEBI" id="CHEBI:32364"/>
        <dbReference type="EC" id="4.2.1.10"/>
    </reaction>
</comment>
<comment type="catalytic activity">
    <reaction evidence="1">
        <text>shikimate + NADP(+) = 3-dehydroshikimate + NADPH + H(+)</text>
        <dbReference type="Rhea" id="RHEA:17737"/>
        <dbReference type="ChEBI" id="CHEBI:15378"/>
        <dbReference type="ChEBI" id="CHEBI:16630"/>
        <dbReference type="ChEBI" id="CHEBI:36208"/>
        <dbReference type="ChEBI" id="CHEBI:57783"/>
        <dbReference type="ChEBI" id="CHEBI:58349"/>
        <dbReference type="EC" id="1.1.1.25"/>
    </reaction>
</comment>
<comment type="catalytic activity">
    <reaction evidence="1">
        <text>shikimate + ATP = 3-phosphoshikimate + ADP + H(+)</text>
        <dbReference type="Rhea" id="RHEA:13121"/>
        <dbReference type="ChEBI" id="CHEBI:15378"/>
        <dbReference type="ChEBI" id="CHEBI:30616"/>
        <dbReference type="ChEBI" id="CHEBI:36208"/>
        <dbReference type="ChEBI" id="CHEBI:145989"/>
        <dbReference type="ChEBI" id="CHEBI:456216"/>
        <dbReference type="EC" id="2.7.1.71"/>
    </reaction>
</comment>
<comment type="catalytic activity">
    <reaction evidence="1">
        <text>3-phosphoshikimate + phosphoenolpyruvate = 5-O-(1-carboxyvinyl)-3-phosphoshikimate + phosphate</text>
        <dbReference type="Rhea" id="RHEA:21256"/>
        <dbReference type="ChEBI" id="CHEBI:43474"/>
        <dbReference type="ChEBI" id="CHEBI:57701"/>
        <dbReference type="ChEBI" id="CHEBI:58702"/>
        <dbReference type="ChEBI" id="CHEBI:145989"/>
        <dbReference type="EC" id="2.5.1.19"/>
    </reaction>
</comment>
<comment type="cofactor">
    <cofactor>
        <name>Zn(2+)</name>
        <dbReference type="ChEBI" id="CHEBI:29105"/>
    </cofactor>
    <text>Binds 2 Zn(2+) ions per subunit.</text>
</comment>
<comment type="pathway">
    <text evidence="1">Metabolic intermediate biosynthesis; chorismate biosynthesis; chorismate from D-erythrose 4-phosphate and phosphoenolpyruvate: step 2/7.</text>
</comment>
<comment type="pathway">
    <text evidence="1">Metabolic intermediate biosynthesis; chorismate biosynthesis; chorismate from D-erythrose 4-phosphate and phosphoenolpyruvate: step 3/7.</text>
</comment>
<comment type="pathway">
    <text evidence="1">Metabolic intermediate biosynthesis; chorismate biosynthesis; chorismate from D-erythrose 4-phosphate and phosphoenolpyruvate: step 4/7.</text>
</comment>
<comment type="pathway">
    <text evidence="1">Metabolic intermediate biosynthesis; chorismate biosynthesis; chorismate from D-erythrose 4-phosphate and phosphoenolpyruvate: step 5/7.</text>
</comment>
<comment type="pathway">
    <text evidence="1">Metabolic intermediate biosynthesis; chorismate biosynthesis; chorismate from D-erythrose 4-phosphate and phosphoenolpyruvate: step 6/7.</text>
</comment>
<comment type="subunit">
    <text evidence="1">Homodimer.</text>
</comment>
<comment type="subcellular location">
    <subcellularLocation>
        <location evidence="1">Cytoplasm</location>
    </subcellularLocation>
</comment>
<comment type="similarity">
    <text evidence="1">In the N-terminal section; belongs to the sugar phosphate cyclases superfamily. Dehydroquinate synthase family.</text>
</comment>
<comment type="similarity">
    <text evidence="1">In the 2nd section; belongs to the EPSP synthase family.</text>
</comment>
<comment type="similarity">
    <text evidence="1">In the 3rd section; belongs to the shikimate kinase family.</text>
</comment>
<comment type="similarity">
    <text evidence="1">In the 4th section; belongs to the type-I 3-dehydroquinase family.</text>
</comment>
<comment type="similarity">
    <text evidence="1">In the C-terminal section; belongs to the shikimate dehydrogenase family.</text>
</comment>
<evidence type="ECO:0000255" key="1">
    <source>
        <dbReference type="HAMAP-Rule" id="MF_03143"/>
    </source>
</evidence>
<organism>
    <name type="scientific">Blastomyces gilchristii (strain SLH14081)</name>
    <name type="common">Blastomyces dermatitidis</name>
    <dbReference type="NCBI Taxonomy" id="559298"/>
    <lineage>
        <taxon>Eukaryota</taxon>
        <taxon>Fungi</taxon>
        <taxon>Dikarya</taxon>
        <taxon>Ascomycota</taxon>
        <taxon>Pezizomycotina</taxon>
        <taxon>Eurotiomycetes</taxon>
        <taxon>Eurotiomycetidae</taxon>
        <taxon>Onygenales</taxon>
        <taxon>Ajellomycetaceae</taxon>
        <taxon>Blastomyces</taxon>
    </lineage>
</organism>
<feature type="chain" id="PRO_0000406701" description="Pentafunctional AROM polypeptide">
    <location>
        <begin position="1"/>
        <end position="1597"/>
    </location>
</feature>
<feature type="region of interest" description="3-dehydroquinate synthase">
    <location>
        <begin position="1"/>
        <end position="384"/>
    </location>
</feature>
<feature type="region of interest" description="EPSP synthase">
    <location>
        <begin position="397"/>
        <end position="842"/>
    </location>
</feature>
<feature type="region of interest" description="Shikimate kinase">
    <location>
        <begin position="866"/>
        <end position="1057"/>
    </location>
</feature>
<feature type="region of interest" description="3-dehydroquinase">
    <location>
        <begin position="1058"/>
        <end position="1278"/>
    </location>
</feature>
<feature type="region of interest" description="Shikimate dehydrogenase">
    <location>
        <begin position="1291"/>
        <end position="1597"/>
    </location>
</feature>
<feature type="active site" description="Proton acceptor; for 3-dehydroquinate synthase activity" evidence="1">
    <location>
        <position position="260"/>
    </location>
</feature>
<feature type="active site" description="Proton acceptor; for 3-dehydroquinate synthase activity" evidence="1">
    <location>
        <position position="275"/>
    </location>
</feature>
<feature type="active site" description="For EPSP synthase activity" evidence="1">
    <location>
        <position position="824"/>
    </location>
</feature>
<feature type="active site" description="Proton acceptor; for 3-dehydroquinate dehydratase activity" evidence="1">
    <location>
        <position position="1181"/>
    </location>
</feature>
<feature type="active site" description="Schiff-base intermediate with substrate; for 3-dehydroquinate dehydratase activity" evidence="1">
    <location>
        <position position="1209"/>
    </location>
</feature>
<feature type="binding site" evidence="1">
    <location>
        <begin position="44"/>
        <end position="46"/>
    </location>
    <ligand>
        <name>NAD(+)</name>
        <dbReference type="ChEBI" id="CHEBI:57540"/>
    </ligand>
</feature>
<feature type="binding site" evidence="1">
    <location>
        <begin position="81"/>
        <end position="84"/>
    </location>
    <ligand>
        <name>NAD(+)</name>
        <dbReference type="ChEBI" id="CHEBI:57540"/>
    </ligand>
</feature>
<feature type="binding site" evidence="1">
    <location>
        <begin position="114"/>
        <end position="116"/>
    </location>
    <ligand>
        <name>NAD(+)</name>
        <dbReference type="ChEBI" id="CHEBI:57540"/>
    </ligand>
</feature>
<feature type="binding site" evidence="1">
    <location>
        <position position="119"/>
    </location>
    <ligand>
        <name>NAD(+)</name>
        <dbReference type="ChEBI" id="CHEBI:57540"/>
    </ligand>
</feature>
<feature type="binding site" evidence="1">
    <location>
        <position position="130"/>
    </location>
    <ligand>
        <name>7-phospho-2-dehydro-3-deoxy-D-arabino-heptonate</name>
        <dbReference type="ChEBI" id="CHEBI:58394"/>
    </ligand>
</feature>
<feature type="binding site" evidence="1">
    <location>
        <begin position="139"/>
        <end position="140"/>
    </location>
    <ligand>
        <name>NAD(+)</name>
        <dbReference type="ChEBI" id="CHEBI:57540"/>
    </ligand>
</feature>
<feature type="binding site" evidence="1">
    <location>
        <position position="146"/>
    </location>
    <ligand>
        <name>7-phospho-2-dehydro-3-deoxy-D-arabino-heptonate</name>
        <dbReference type="ChEBI" id="CHEBI:58394"/>
    </ligand>
</feature>
<feature type="binding site" evidence="1">
    <location>
        <position position="152"/>
    </location>
    <ligand>
        <name>7-phospho-2-dehydro-3-deoxy-D-arabino-heptonate</name>
        <dbReference type="ChEBI" id="CHEBI:58394"/>
    </ligand>
</feature>
<feature type="binding site" evidence="1">
    <location>
        <position position="161"/>
    </location>
    <ligand>
        <name>NAD(+)</name>
        <dbReference type="ChEBI" id="CHEBI:57540"/>
    </ligand>
</feature>
<feature type="binding site" evidence="1">
    <location>
        <position position="162"/>
    </location>
    <ligand>
        <name>7-phospho-2-dehydro-3-deoxy-D-arabino-heptonate</name>
        <dbReference type="ChEBI" id="CHEBI:58394"/>
    </ligand>
</feature>
<feature type="binding site" evidence="1">
    <location>
        <begin position="179"/>
        <end position="182"/>
    </location>
    <ligand>
        <name>NAD(+)</name>
        <dbReference type="ChEBI" id="CHEBI:57540"/>
    </ligand>
</feature>
<feature type="binding site" evidence="1">
    <location>
        <position position="190"/>
    </location>
    <ligand>
        <name>NAD(+)</name>
        <dbReference type="ChEBI" id="CHEBI:57540"/>
    </ligand>
</feature>
<feature type="binding site" evidence="1">
    <location>
        <begin position="194"/>
        <end position="197"/>
    </location>
    <ligand>
        <name>7-phospho-2-dehydro-3-deoxy-D-arabino-heptonate</name>
        <dbReference type="ChEBI" id="CHEBI:58394"/>
    </ligand>
</feature>
<feature type="binding site" evidence="1">
    <location>
        <position position="194"/>
    </location>
    <ligand>
        <name>Zn(2+)</name>
        <dbReference type="ChEBI" id="CHEBI:29105"/>
        <note>catalytic</note>
    </ligand>
</feature>
<feature type="binding site" evidence="1">
    <location>
        <position position="250"/>
    </location>
    <ligand>
        <name>7-phospho-2-dehydro-3-deoxy-D-arabino-heptonate</name>
        <dbReference type="ChEBI" id="CHEBI:58394"/>
    </ligand>
</feature>
<feature type="binding site" evidence="1">
    <location>
        <begin position="264"/>
        <end position="268"/>
    </location>
    <ligand>
        <name>7-phospho-2-dehydro-3-deoxy-D-arabino-heptonate</name>
        <dbReference type="ChEBI" id="CHEBI:58394"/>
    </ligand>
</feature>
<feature type="binding site" evidence="1">
    <location>
        <position position="271"/>
    </location>
    <ligand>
        <name>7-phospho-2-dehydro-3-deoxy-D-arabino-heptonate</name>
        <dbReference type="ChEBI" id="CHEBI:58394"/>
    </ligand>
</feature>
<feature type="binding site" evidence="1">
    <location>
        <position position="271"/>
    </location>
    <ligand>
        <name>Zn(2+)</name>
        <dbReference type="ChEBI" id="CHEBI:29105"/>
        <note>catalytic</note>
    </ligand>
</feature>
<feature type="binding site" evidence="1">
    <location>
        <position position="287"/>
    </location>
    <ligand>
        <name>7-phospho-2-dehydro-3-deoxy-D-arabino-heptonate</name>
        <dbReference type="ChEBI" id="CHEBI:58394"/>
    </ligand>
</feature>
<feature type="binding site" evidence="1">
    <location>
        <position position="287"/>
    </location>
    <ligand>
        <name>Zn(2+)</name>
        <dbReference type="ChEBI" id="CHEBI:29105"/>
        <note>catalytic</note>
    </ligand>
</feature>
<feature type="binding site" evidence="1">
    <location>
        <position position="356"/>
    </location>
    <ligand>
        <name>7-phospho-2-dehydro-3-deoxy-D-arabino-heptonate</name>
        <dbReference type="ChEBI" id="CHEBI:58394"/>
    </ligand>
</feature>
<feature type="binding site" evidence="1">
    <location>
        <begin position="872"/>
        <end position="879"/>
    </location>
    <ligand>
        <name>ATP</name>
        <dbReference type="ChEBI" id="CHEBI:30616"/>
    </ligand>
</feature>
<sequence>MGVPTKISILGRESIVADFGIWRNYVAKDLLNSCSSSTYILISDTNITPLYLDGFQKSFDDAAANLSPKPRLLTYEIPPGESSKSRETKAGIEDWMLTRQPPCGRDTVIIALGGGVIGDLIGFVAATYMRGVRFVQVPTTLLAMVDSSIGGKTAIDTPNGKNLIGAIWQPQRIYLDMEFLNTLPEREFINGMAEVIKTAAISSEEKFAALEDDAEIILAAVKSKNTPERPRFSGIEETLKRTILSSAEFKAQVVSADEREGGLRNLLNFGHSIGHAIEAILAPQVLHGECVAIGMVKEAELARHLGILNNVSVSRISKCLASYGLPTSLKDERIRKLTADKHCSVEQLITYMGVDKKNDGPKKKVVLLSAIGRTHEPRASTVSNEEIQIVLAPSIEVSPGVPKNLNVTCTPPGSKSISNRALVLAALGSGTCRLKNLLHSDDTEVMLNALERLGAATFSWENEGEVLVVNGKGGKMKASPDELYLGNAGTASRFLTTVATLAQKSSVDSSVLTGNARMKQRPIGDLVDALAANGAGVEYLENSGSLPLKIAASGGFAGGEINLAAKVSSQYVSSLLMCAPYAKKPVTLRLVGGKPISQTYIDMTTTMMRSFGIDVKKSETEEHTYHIPLGFYISPAEYIVESDASSSTYPLAVAAITGTSCTVPNIGSKSLQGDARFAVEVLRPMGCTVDQKDFSTTVTGPANGILRPLPNVDMEPMTDAFLTASVLAAVARGGGSNHTTRIFGIANQRVKECNRIKAMKDELAKFGVTCREHDDGLEIDGIDRSTLRHPSDGVYCYDDHRVAMSFSVLSLVAPQPTLILEKECVGKTWPGWWDSLAQTFKVKLDGKEVEKKTGTGGIVHLDKPAASIFIIGMRGAGKTTSGVWVSKALQRPFIDLDDELERTEGMTIPEIIKQRGWEGFREAELSLLRRVMTEKPTGYIFACGGGIVETPEARKLLIQYHKTKGNVILVMRDIKEIMDFLKIDKTRPAYVEDMMSVWLRRKPWYQECSNVQYFSRLTGLDGMAQVLGGFNRFLKVITGQVDSLAQMRSKENTFFVSLTLPDLAPAAPILKEVTLGSDAVELRVDLLKDPQSDSEIPSVDYVAEQISVLRSRTSVPLVFTIRTKAQGGRFPDDAYDAALQLYRLAIRMGSEFVDLEISFPEQLLRTVTEMKGFSKIIASHHDPKGELSWANGSWIQFYNKALQYGDVIKLVGVARSLDDNASLKKFKTWAEEKHDVPIIAINMGDKGQLSRMLNGFMTPVSHPSLPFKAAPGQLSAREIRKGLSLIGEIKSKKFAVIGNPVSASRSPAMHNALFRQMGLPHTYGTLETEDPEIVKKFIRSPDFGGASITIPLKLDIMPLLDEIAPEAVSIGAVNTIVCAPPAPDDQSQAPRLIGRNTDWQGMVRCLSDAGAYPAATPTTTSAGLVIGGGGTARAAIFALQSMGYSPIYVVGRSPDKLSSMTSTFAPDHDIRILEDVKALESLPTVAIGTIPGDKPIEPHMREVLCELFDLCEKANSDAEQARGISTKRILLEMAYKPSVTSLMQLASDSGWTVLPGLEALVAQGVYQCEYWTDITPVYEDARNAVMGVQPKDDDIST</sequence>
<accession>C5JKE6</accession>
<accession>A0A179UHZ8</accession>
<gene>
    <name type="ORF">BDBG_02999</name>
</gene>
<reference key="1">
    <citation type="journal article" date="2015" name="PLoS Genet.">
        <title>The dynamic genome and transcriptome of the human fungal pathogen Blastomyces and close relative Emmonsia.</title>
        <authorList>
            <person name="Munoz J.F."/>
            <person name="Gauthier G.M."/>
            <person name="Desjardins C.A."/>
            <person name="Gallo J.E."/>
            <person name="Holder J."/>
            <person name="Sullivan T.D."/>
            <person name="Marty A.J."/>
            <person name="Carmen J.C."/>
            <person name="Chen Z."/>
            <person name="Ding L."/>
            <person name="Gujja S."/>
            <person name="Magrini V."/>
            <person name="Misas E."/>
            <person name="Mitreva M."/>
            <person name="Priest M."/>
            <person name="Saif S."/>
            <person name="Whiston E.A."/>
            <person name="Young S."/>
            <person name="Zeng Q."/>
            <person name="Goldman W.E."/>
            <person name="Mardis E.R."/>
            <person name="Taylor J.W."/>
            <person name="McEwen J.G."/>
            <person name="Clay O.K."/>
            <person name="Klein B.S."/>
            <person name="Cuomo C.A."/>
        </authorList>
    </citation>
    <scope>NUCLEOTIDE SEQUENCE [LARGE SCALE GENOMIC DNA]</scope>
    <source>
        <strain>SLH14081</strain>
    </source>
</reference>